<comment type="function">
    <text evidence="1 4">May be involved in modulation of TNF response. May be involved in presentation of TNFRSF1A on the cell surface (PubMed:16332174). Involved in the endosome-to-plasma membrane trafficking and recycling of SNX27-retromer-dependent cargo proteins, such as GLUT1. Involved in the regulation of cytokinesis; the function may involve PTPN13 and GIT1 (By similarity).</text>
</comment>
<comment type="function">
    <text evidence="1 4">Endosome-associated protein that plays a role in membrane receptor sorting, cytokinesis and ciliogenesis. Involved in the endosome-to-plasma membrane trafficking and recycling of SNX27-retromer-dependent cargo proteins, such as GLUT1. Involved in the regulation of cytokinesis; the function may involve PTPN13 and GIT1. Plays a role in the formation of cilia. Involved in cargo protein localization, such as PKD2, at primary cilia (By similarity). Involved in the presentation of the tumor necrosis factor (TNF) receptor TNFRSF1A on the cell surface, and hence in the modulation of the TNF-induced apoptosis (PubMed:16332174).</text>
</comment>
<comment type="subunit">
    <text evidence="1 5">Found in a complex with ENTR1, PTPN13 and GIT1. Interacts with PTPN13 (via the FERM domain) (By similarity). Interacts (via N-terminus) with GIT1 (via N- and C-terminus); this interaction is direct (PubMed:23108400). Interacts with NOD2. Interacts (via N-terminus) with IFT88. Interacts with VPS35.</text>
</comment>
<comment type="subcellular location">
    <subcellularLocation>
        <location evidence="4">Cytoplasm</location>
    </subcellularLocation>
    <subcellularLocation>
        <location evidence="1">Early endosome</location>
    </subcellularLocation>
    <subcellularLocation>
        <location evidence="1">Endosome</location>
    </subcellularLocation>
    <subcellularLocation>
        <location evidence="1">Recycling endosome</location>
    </subcellularLocation>
    <subcellularLocation>
        <location evidence="1">Midbody</location>
    </subcellularLocation>
    <subcellularLocation>
        <location evidence="1">Cytoplasm</location>
        <location evidence="1">Cytoskeleton</location>
        <location evidence="1">Microtubule organizing center</location>
        <location evidence="1">Centrosome</location>
    </subcellularLocation>
    <subcellularLocation>
        <location evidence="1">Cytoplasm</location>
        <location evidence="1">Cytoskeleton</location>
        <location evidence="1">Cilium basal body</location>
    </subcellularLocation>
    <text evidence="1">Colocalizes in a WASHC2-dependent manner with the retromer CSC complex at endosomes. During cytokinesis colocalized with PTPN13 at the midbody. Colocalizes with IFT88 and gamma-tubulin at the basal body of primary cilia. Colocalizes with IFT88 and pericentrin at the centrosome.</text>
</comment>
<comment type="alternative products">
    <event type="alternative splicing"/>
    <isoform>
        <id>A2AIW0-1</id>
        <name>1</name>
        <sequence type="displayed"/>
    </isoform>
    <isoform>
        <id>A2AIW0-2</id>
        <name>2</name>
        <sequence type="described" ref="VSP_032180"/>
    </isoform>
    <isoform>
        <id>A2AIW0-3</id>
        <name>3</name>
        <sequence type="described" ref="VSP_032179"/>
    </isoform>
    <isoform>
        <id>A2AIW0-4</id>
        <name>4</name>
        <sequence type="described" ref="VSP_032178"/>
    </isoform>
    <isoform>
        <id>A2AIW0-5</id>
        <name>5</name>
        <sequence type="described" ref="VSP_032183"/>
    </isoform>
    <isoform>
        <id>A2AIW0-6</id>
        <name>6</name>
        <sequence type="described" ref="VSP_032180 VSP_032181 VSP_032182"/>
    </isoform>
</comment>
<comment type="domain">
    <text evidence="1">Tne N-terminal domain is necessary and sufficient for basal body localization and ciliogenesis.</text>
</comment>
<comment type="PTM">
    <text evidence="1">Phosphorylated.</text>
</comment>
<comment type="similarity">
    <text evidence="9">Belongs to the ENTR1 family.</text>
</comment>
<comment type="sequence caution" evidence="9">
    <conflict type="erroneous initiation">
        <sequence resource="EMBL-CDS" id="BAB30158"/>
    </conflict>
</comment>
<comment type="sequence caution" evidence="9">
    <conflict type="frameshift">
        <sequence resource="EMBL-CDS" id="BAB32357"/>
    </conflict>
</comment>
<proteinExistence type="evidence at protein level"/>
<evidence type="ECO:0000250" key="1">
    <source>
        <dbReference type="UniProtKB" id="Q96C92"/>
    </source>
</evidence>
<evidence type="ECO:0000255" key="2"/>
<evidence type="ECO:0000256" key="3">
    <source>
        <dbReference type="SAM" id="MobiDB-lite"/>
    </source>
</evidence>
<evidence type="ECO:0000269" key="4">
    <source>
    </source>
</evidence>
<evidence type="ECO:0000269" key="5">
    <source>
    </source>
</evidence>
<evidence type="ECO:0000303" key="6">
    <source>
    </source>
</evidence>
<evidence type="ECO:0000303" key="7">
    <source>
    </source>
</evidence>
<evidence type="ECO:0000303" key="8">
    <source>
    </source>
</evidence>
<evidence type="ECO:0000305" key="9"/>
<evidence type="ECO:0007744" key="10">
    <source>
    </source>
</evidence>
<gene>
    <name evidence="1" type="primary">Entr1</name>
    <name type="synonym">Sdccag3</name>
</gene>
<accession>A2AIW0</accession>
<accession>A2AIW1</accession>
<accession>Q3TQC5</accession>
<accession>Q6P8W2</accession>
<accession>Q8BIV5</accession>
<accession>Q8K0I8</accession>
<accession>Q9D1V2</accession>
<accession>Q9D4S1</accession>
<accession>Q9D5W1</accession>
<organism>
    <name type="scientific">Mus musculus</name>
    <name type="common">Mouse</name>
    <dbReference type="NCBI Taxonomy" id="10090"/>
    <lineage>
        <taxon>Eukaryota</taxon>
        <taxon>Metazoa</taxon>
        <taxon>Chordata</taxon>
        <taxon>Craniata</taxon>
        <taxon>Vertebrata</taxon>
        <taxon>Euteleostomi</taxon>
        <taxon>Mammalia</taxon>
        <taxon>Eutheria</taxon>
        <taxon>Euarchontoglires</taxon>
        <taxon>Glires</taxon>
        <taxon>Rodentia</taxon>
        <taxon>Myomorpha</taxon>
        <taxon>Muroidea</taxon>
        <taxon>Muridae</taxon>
        <taxon>Murinae</taxon>
        <taxon>Mus</taxon>
        <taxon>Mus</taxon>
    </lineage>
</organism>
<dbReference type="EMBL" id="AK082787">
    <property type="protein sequence ID" value="BAC38620.1"/>
    <property type="molecule type" value="mRNA"/>
</dbReference>
<dbReference type="EMBL" id="AK016227">
    <property type="protein sequence ID" value="BAB30158.1"/>
    <property type="status" value="ALT_INIT"/>
    <property type="molecule type" value="mRNA"/>
</dbReference>
<dbReference type="EMBL" id="AK021273">
    <property type="protein sequence ID" value="BAB32357.1"/>
    <property type="status" value="ALT_FRAME"/>
    <property type="molecule type" value="mRNA"/>
</dbReference>
<dbReference type="EMBL" id="AK014885">
    <property type="protein sequence ID" value="BAB29602.1"/>
    <property type="molecule type" value="mRNA"/>
</dbReference>
<dbReference type="EMBL" id="AK163690">
    <property type="protein sequence ID" value="BAE37459.1"/>
    <property type="molecule type" value="mRNA"/>
</dbReference>
<dbReference type="EMBL" id="AL732541">
    <property type="status" value="NOT_ANNOTATED_CDS"/>
    <property type="molecule type" value="Genomic_DNA"/>
</dbReference>
<dbReference type="EMBL" id="BC031199">
    <property type="protein sequence ID" value="AAH31199.1"/>
    <property type="molecule type" value="mRNA"/>
</dbReference>
<dbReference type="EMBL" id="BC061037">
    <property type="protein sequence ID" value="AAH61037.1"/>
    <property type="molecule type" value="mRNA"/>
</dbReference>
<dbReference type="CCDS" id="CCDS15803.2">
    <molecule id="A2AIW0-1"/>
</dbReference>
<dbReference type="CCDS" id="CCDS50540.1">
    <molecule id="A2AIW0-3"/>
</dbReference>
<dbReference type="CCDS" id="CCDS50541.1">
    <molecule id="A2AIW0-2"/>
</dbReference>
<dbReference type="RefSeq" id="NP_001078876.1">
    <molecule id="A2AIW0-2"/>
    <property type="nucleotide sequence ID" value="NM_001085407.1"/>
</dbReference>
<dbReference type="RefSeq" id="NP_001078877.1">
    <molecule id="A2AIW0-3"/>
    <property type="nucleotide sequence ID" value="NM_001085408.1"/>
</dbReference>
<dbReference type="RefSeq" id="NP_080839.2">
    <molecule id="A2AIW0-1"/>
    <property type="nucleotide sequence ID" value="NM_026563.3"/>
</dbReference>
<dbReference type="SMR" id="A2AIW0"/>
<dbReference type="FunCoup" id="A2AIW0">
    <property type="interactions" value="1802"/>
</dbReference>
<dbReference type="STRING" id="10090.ENSMUSP00000109737"/>
<dbReference type="iPTMnet" id="A2AIW0"/>
<dbReference type="PhosphoSitePlus" id="A2AIW0"/>
<dbReference type="jPOST" id="A2AIW0"/>
<dbReference type="PaxDb" id="10090-ENSMUSP00000109737"/>
<dbReference type="ProteomicsDB" id="256719">
    <molecule id="A2AIW0-1"/>
</dbReference>
<dbReference type="ProteomicsDB" id="256720">
    <molecule id="A2AIW0-2"/>
</dbReference>
<dbReference type="ProteomicsDB" id="256721">
    <molecule id="A2AIW0-3"/>
</dbReference>
<dbReference type="ProteomicsDB" id="256722">
    <molecule id="A2AIW0-4"/>
</dbReference>
<dbReference type="ProteomicsDB" id="256723">
    <molecule id="A2AIW0-5"/>
</dbReference>
<dbReference type="ProteomicsDB" id="256724">
    <molecule id="A2AIW0-6"/>
</dbReference>
<dbReference type="Antibodypedia" id="32151">
    <property type="antibodies" value="137 antibodies from 22 providers"/>
</dbReference>
<dbReference type="Ensembl" id="ENSMUST00000028293.12">
    <molecule id="A2AIW0-2"/>
    <property type="protein sequence ID" value="ENSMUSP00000028293.6"/>
    <property type="gene ID" value="ENSMUSG00000026927.18"/>
</dbReference>
<dbReference type="Ensembl" id="ENSMUST00000077983.13">
    <molecule id="A2AIW0-3"/>
    <property type="protein sequence ID" value="ENSMUSP00000077133.7"/>
    <property type="gene ID" value="ENSMUSG00000026927.18"/>
</dbReference>
<dbReference type="Ensembl" id="ENSMUST00000114102.10">
    <molecule id="A2AIW0-1"/>
    <property type="protein sequence ID" value="ENSMUSP00000109737.4"/>
    <property type="gene ID" value="ENSMUSG00000026927.18"/>
</dbReference>
<dbReference type="GeneID" id="68112"/>
<dbReference type="KEGG" id="mmu:68112"/>
<dbReference type="UCSC" id="uc008iuy.1">
    <molecule id="A2AIW0-1"/>
    <property type="organism name" value="mouse"/>
</dbReference>
<dbReference type="UCSC" id="uc008iuz.1">
    <molecule id="A2AIW0-2"/>
    <property type="organism name" value="mouse"/>
</dbReference>
<dbReference type="UCSC" id="uc008iva.1">
    <molecule id="A2AIW0-3"/>
    <property type="organism name" value="mouse"/>
</dbReference>
<dbReference type="UCSC" id="uc008ivb.1">
    <molecule id="A2AIW0-5"/>
    <property type="organism name" value="mouse"/>
</dbReference>
<dbReference type="UCSC" id="uc008ivc.1">
    <molecule id="A2AIW0-6"/>
    <property type="organism name" value="mouse"/>
</dbReference>
<dbReference type="AGR" id="MGI:1915362"/>
<dbReference type="CTD" id="10807"/>
<dbReference type="MGI" id="MGI:1915362">
    <property type="gene designation" value="Entr1"/>
</dbReference>
<dbReference type="VEuPathDB" id="HostDB:ENSMUSG00000026927"/>
<dbReference type="eggNOG" id="ENOG502QUJK">
    <property type="taxonomic scope" value="Eukaryota"/>
</dbReference>
<dbReference type="GeneTree" id="ENSGT00390000000560"/>
<dbReference type="InParanoid" id="A2AIW0"/>
<dbReference type="OMA" id="WSGSYHP"/>
<dbReference type="OrthoDB" id="6499155at2759"/>
<dbReference type="PhylomeDB" id="A2AIW0"/>
<dbReference type="TreeFam" id="TF335840"/>
<dbReference type="BioGRID-ORCS" id="68112">
    <property type="hits" value="1 hit in 78 CRISPR screens"/>
</dbReference>
<dbReference type="ChiTaRS" id="Sdccag3">
    <property type="organism name" value="mouse"/>
</dbReference>
<dbReference type="PRO" id="PR:A2AIW0"/>
<dbReference type="Proteomes" id="UP000000589">
    <property type="component" value="Chromosome 2"/>
</dbReference>
<dbReference type="RNAct" id="A2AIW0">
    <property type="molecule type" value="protein"/>
</dbReference>
<dbReference type="Bgee" id="ENSMUSG00000026927">
    <property type="expression patterns" value="Expressed in seminiferous tubule of testis and 252 other cell types or tissues"/>
</dbReference>
<dbReference type="ExpressionAtlas" id="A2AIW0">
    <property type="expression patterns" value="baseline and differential"/>
</dbReference>
<dbReference type="GO" id="GO:0005813">
    <property type="term" value="C:centrosome"/>
    <property type="evidence" value="ECO:0000250"/>
    <property type="project" value="UniProtKB"/>
</dbReference>
<dbReference type="GO" id="GO:0036064">
    <property type="term" value="C:ciliary basal body"/>
    <property type="evidence" value="ECO:0000250"/>
    <property type="project" value="UniProtKB"/>
</dbReference>
<dbReference type="GO" id="GO:0005769">
    <property type="term" value="C:early endosome"/>
    <property type="evidence" value="ECO:0007669"/>
    <property type="project" value="UniProtKB-SubCell"/>
</dbReference>
<dbReference type="GO" id="GO:0030496">
    <property type="term" value="C:midbody"/>
    <property type="evidence" value="ECO:0007669"/>
    <property type="project" value="UniProtKB-SubCell"/>
</dbReference>
<dbReference type="GO" id="GO:0055037">
    <property type="term" value="C:recycling endosome"/>
    <property type="evidence" value="ECO:0007669"/>
    <property type="project" value="UniProtKB-SubCell"/>
</dbReference>
<dbReference type="GO" id="GO:0030904">
    <property type="term" value="C:retromer complex"/>
    <property type="evidence" value="ECO:0007669"/>
    <property type="project" value="Ensembl"/>
</dbReference>
<dbReference type="GO" id="GO:0051301">
    <property type="term" value="P:cell division"/>
    <property type="evidence" value="ECO:0007669"/>
    <property type="project" value="UniProtKB-KW"/>
</dbReference>
<dbReference type="GO" id="GO:0030030">
    <property type="term" value="P:cell projection organization"/>
    <property type="evidence" value="ECO:0007669"/>
    <property type="project" value="UniProtKB-KW"/>
</dbReference>
<dbReference type="GO" id="GO:0032456">
    <property type="term" value="P:endocytic recycling"/>
    <property type="evidence" value="ECO:0007669"/>
    <property type="project" value="Ensembl"/>
</dbReference>
<dbReference type="GO" id="GO:0045724">
    <property type="term" value="P:positive regulation of cilium assembly"/>
    <property type="evidence" value="ECO:0000250"/>
    <property type="project" value="UniProtKB"/>
</dbReference>
<dbReference type="GO" id="GO:1903566">
    <property type="term" value="P:positive regulation of protein localization to cilium"/>
    <property type="evidence" value="ECO:0000250"/>
    <property type="project" value="UniProtKB"/>
</dbReference>
<dbReference type="GO" id="GO:0015031">
    <property type="term" value="P:protein transport"/>
    <property type="evidence" value="ECO:0007669"/>
    <property type="project" value="UniProtKB-KW"/>
</dbReference>
<dbReference type="GO" id="GO:0032465">
    <property type="term" value="P:regulation of cytokinesis"/>
    <property type="evidence" value="ECO:0007669"/>
    <property type="project" value="Ensembl"/>
</dbReference>
<dbReference type="InterPro" id="IPR026757">
    <property type="entry name" value="ENTR1"/>
</dbReference>
<dbReference type="PANTHER" id="PTHR31259">
    <property type="entry name" value="ENDOSOME-ASSOCIATED TRAFFICKING REGULATOR 1"/>
    <property type="match status" value="1"/>
</dbReference>
<dbReference type="PANTHER" id="PTHR31259:SF3">
    <property type="entry name" value="ENDOSOME-ASSOCIATED-TRAFFICKING REGULATOR 1"/>
    <property type="match status" value="1"/>
</dbReference>
<sequence>MSGYARRQGAPPLSRTRSLVVPDAPAFYERRSCLPQLDCERPHGGDLHPHLFGFRPTFMCYVPSPVLASVGDTGFGYGKGKCTNQGPSGAPETRFGGDKLEDLEEANPFSFKEFLKTKNLSLSKEDTTTSRIYPKEASRHPLGLEHSSPASQLMGYGLESQQPFFEDPTRASNLEEDEDDGWNITYLPSAVDQTHSSRDTQDSPPCDTYLSFFSNSSELACPESLPPWTLSDTDSRISPASPAGSPNADFAAHEESLGDRHLRTLQISYEALKDENSKLRRKLNEVQSFSETQTEMVRTLERKLEAKMIKEESDFHDLESVVQQVEQNLELMTKRAVKAENHVLKLKQEINLLQAQLSNLRRENEALRSGQGASLSVVKQNTDVALQNLHLVMNSAHASIKQLVSGADTLNLVAEILKSIDRISEVKDEVDS</sequence>
<reference key="1">
    <citation type="journal article" date="2005" name="Science">
        <title>The transcriptional landscape of the mammalian genome.</title>
        <authorList>
            <person name="Carninci P."/>
            <person name="Kasukawa T."/>
            <person name="Katayama S."/>
            <person name="Gough J."/>
            <person name="Frith M.C."/>
            <person name="Maeda N."/>
            <person name="Oyama R."/>
            <person name="Ravasi T."/>
            <person name="Lenhard B."/>
            <person name="Wells C."/>
            <person name="Kodzius R."/>
            <person name="Shimokawa K."/>
            <person name="Bajic V.B."/>
            <person name="Brenner S.E."/>
            <person name="Batalov S."/>
            <person name="Forrest A.R."/>
            <person name="Zavolan M."/>
            <person name="Davis M.J."/>
            <person name="Wilming L.G."/>
            <person name="Aidinis V."/>
            <person name="Allen J.E."/>
            <person name="Ambesi-Impiombato A."/>
            <person name="Apweiler R."/>
            <person name="Aturaliya R.N."/>
            <person name="Bailey T.L."/>
            <person name="Bansal M."/>
            <person name="Baxter L."/>
            <person name="Beisel K.W."/>
            <person name="Bersano T."/>
            <person name="Bono H."/>
            <person name="Chalk A.M."/>
            <person name="Chiu K.P."/>
            <person name="Choudhary V."/>
            <person name="Christoffels A."/>
            <person name="Clutterbuck D.R."/>
            <person name="Crowe M.L."/>
            <person name="Dalla E."/>
            <person name="Dalrymple B.P."/>
            <person name="de Bono B."/>
            <person name="Della Gatta G."/>
            <person name="di Bernardo D."/>
            <person name="Down T."/>
            <person name="Engstrom P."/>
            <person name="Fagiolini M."/>
            <person name="Faulkner G."/>
            <person name="Fletcher C.F."/>
            <person name="Fukushima T."/>
            <person name="Furuno M."/>
            <person name="Futaki S."/>
            <person name="Gariboldi M."/>
            <person name="Georgii-Hemming P."/>
            <person name="Gingeras T.R."/>
            <person name="Gojobori T."/>
            <person name="Green R.E."/>
            <person name="Gustincich S."/>
            <person name="Harbers M."/>
            <person name="Hayashi Y."/>
            <person name="Hensch T.K."/>
            <person name="Hirokawa N."/>
            <person name="Hill D."/>
            <person name="Huminiecki L."/>
            <person name="Iacono M."/>
            <person name="Ikeo K."/>
            <person name="Iwama A."/>
            <person name="Ishikawa T."/>
            <person name="Jakt M."/>
            <person name="Kanapin A."/>
            <person name="Katoh M."/>
            <person name="Kawasawa Y."/>
            <person name="Kelso J."/>
            <person name="Kitamura H."/>
            <person name="Kitano H."/>
            <person name="Kollias G."/>
            <person name="Krishnan S.P."/>
            <person name="Kruger A."/>
            <person name="Kummerfeld S.K."/>
            <person name="Kurochkin I.V."/>
            <person name="Lareau L.F."/>
            <person name="Lazarevic D."/>
            <person name="Lipovich L."/>
            <person name="Liu J."/>
            <person name="Liuni S."/>
            <person name="McWilliam S."/>
            <person name="Madan Babu M."/>
            <person name="Madera M."/>
            <person name="Marchionni L."/>
            <person name="Matsuda H."/>
            <person name="Matsuzawa S."/>
            <person name="Miki H."/>
            <person name="Mignone F."/>
            <person name="Miyake S."/>
            <person name="Morris K."/>
            <person name="Mottagui-Tabar S."/>
            <person name="Mulder N."/>
            <person name="Nakano N."/>
            <person name="Nakauchi H."/>
            <person name="Ng P."/>
            <person name="Nilsson R."/>
            <person name="Nishiguchi S."/>
            <person name="Nishikawa S."/>
            <person name="Nori F."/>
            <person name="Ohara O."/>
            <person name="Okazaki Y."/>
            <person name="Orlando V."/>
            <person name="Pang K.C."/>
            <person name="Pavan W.J."/>
            <person name="Pavesi G."/>
            <person name="Pesole G."/>
            <person name="Petrovsky N."/>
            <person name="Piazza S."/>
            <person name="Reed J."/>
            <person name="Reid J.F."/>
            <person name="Ring B.Z."/>
            <person name="Ringwald M."/>
            <person name="Rost B."/>
            <person name="Ruan Y."/>
            <person name="Salzberg S.L."/>
            <person name="Sandelin A."/>
            <person name="Schneider C."/>
            <person name="Schoenbach C."/>
            <person name="Sekiguchi K."/>
            <person name="Semple C.A."/>
            <person name="Seno S."/>
            <person name="Sessa L."/>
            <person name="Sheng Y."/>
            <person name="Shibata Y."/>
            <person name="Shimada H."/>
            <person name="Shimada K."/>
            <person name="Silva D."/>
            <person name="Sinclair B."/>
            <person name="Sperling S."/>
            <person name="Stupka E."/>
            <person name="Sugiura K."/>
            <person name="Sultana R."/>
            <person name="Takenaka Y."/>
            <person name="Taki K."/>
            <person name="Tammoja K."/>
            <person name="Tan S.L."/>
            <person name="Tang S."/>
            <person name="Taylor M.S."/>
            <person name="Tegner J."/>
            <person name="Teichmann S.A."/>
            <person name="Ueda H.R."/>
            <person name="van Nimwegen E."/>
            <person name="Verardo R."/>
            <person name="Wei C.L."/>
            <person name="Yagi K."/>
            <person name="Yamanishi H."/>
            <person name="Zabarovsky E."/>
            <person name="Zhu S."/>
            <person name="Zimmer A."/>
            <person name="Hide W."/>
            <person name="Bult C."/>
            <person name="Grimmond S.M."/>
            <person name="Teasdale R.D."/>
            <person name="Liu E.T."/>
            <person name="Brusic V."/>
            <person name="Quackenbush J."/>
            <person name="Wahlestedt C."/>
            <person name="Mattick J.S."/>
            <person name="Hume D.A."/>
            <person name="Kai C."/>
            <person name="Sasaki D."/>
            <person name="Tomaru Y."/>
            <person name="Fukuda S."/>
            <person name="Kanamori-Katayama M."/>
            <person name="Suzuki M."/>
            <person name="Aoki J."/>
            <person name="Arakawa T."/>
            <person name="Iida J."/>
            <person name="Imamura K."/>
            <person name="Itoh M."/>
            <person name="Kato T."/>
            <person name="Kawaji H."/>
            <person name="Kawagashira N."/>
            <person name="Kawashima T."/>
            <person name="Kojima M."/>
            <person name="Kondo S."/>
            <person name="Konno H."/>
            <person name="Nakano K."/>
            <person name="Ninomiya N."/>
            <person name="Nishio T."/>
            <person name="Okada M."/>
            <person name="Plessy C."/>
            <person name="Shibata K."/>
            <person name="Shiraki T."/>
            <person name="Suzuki S."/>
            <person name="Tagami M."/>
            <person name="Waki K."/>
            <person name="Watahiki A."/>
            <person name="Okamura-Oho Y."/>
            <person name="Suzuki H."/>
            <person name="Kawai J."/>
            <person name="Hayashizaki Y."/>
        </authorList>
    </citation>
    <scope>NUCLEOTIDE SEQUENCE [LARGE SCALE MRNA] (ISOFORMS 2; 3; 4 AND 5)</scope>
    <source>
        <strain>C57BL/6J</strain>
        <tissue>Cerebellum</tissue>
        <tissue>Hippocampus</tissue>
        <tissue>Testis</tissue>
    </source>
</reference>
<reference key="2">
    <citation type="journal article" date="2009" name="PLoS Biol.">
        <title>Lineage-specific biology revealed by a finished genome assembly of the mouse.</title>
        <authorList>
            <person name="Church D.M."/>
            <person name="Goodstadt L."/>
            <person name="Hillier L.W."/>
            <person name="Zody M.C."/>
            <person name="Goldstein S."/>
            <person name="She X."/>
            <person name="Bult C.J."/>
            <person name="Agarwala R."/>
            <person name="Cherry J.L."/>
            <person name="DiCuccio M."/>
            <person name="Hlavina W."/>
            <person name="Kapustin Y."/>
            <person name="Meric P."/>
            <person name="Maglott D."/>
            <person name="Birtle Z."/>
            <person name="Marques A.C."/>
            <person name="Graves T."/>
            <person name="Zhou S."/>
            <person name="Teague B."/>
            <person name="Potamousis K."/>
            <person name="Churas C."/>
            <person name="Place M."/>
            <person name="Herschleb J."/>
            <person name="Runnheim R."/>
            <person name="Forrest D."/>
            <person name="Amos-Landgraf J."/>
            <person name="Schwartz D.C."/>
            <person name="Cheng Z."/>
            <person name="Lindblad-Toh K."/>
            <person name="Eichler E.E."/>
            <person name="Ponting C.P."/>
        </authorList>
    </citation>
    <scope>NUCLEOTIDE SEQUENCE [LARGE SCALE GENOMIC DNA]</scope>
    <source>
        <strain>C57BL/6J</strain>
    </source>
</reference>
<reference key="3">
    <citation type="journal article" date="2004" name="Genome Res.">
        <title>The status, quality, and expansion of the NIH full-length cDNA project: the Mammalian Gene Collection (MGC).</title>
        <authorList>
            <consortium name="The MGC Project Team"/>
        </authorList>
    </citation>
    <scope>NUCLEOTIDE SEQUENCE [LARGE SCALE MRNA] (ISOFORMS 3 AND 6)</scope>
    <source>
        <strain>FVB/N</strain>
        <tissue>Brain</tissue>
        <tissue>Kidney</tissue>
    </source>
</reference>
<reference key="4">
    <citation type="journal article" date="2005" name="DNA Cell Biol.">
        <title>Serologically defined colon cancer antigen 3 is necessary for the presentation of TNF receptor 1 on cell surface.</title>
        <authorList>
            <person name="Neznanov N."/>
            <person name="Neznanova L."/>
            <person name="Angres B."/>
            <person name="Gudkov A.V."/>
        </authorList>
    </citation>
    <scope>FUNCTION</scope>
    <scope>SUBCELLULAR LOCATION</scope>
</reference>
<reference key="5">
    <citation type="journal article" date="2010" name="Cell">
        <title>A tissue-specific atlas of mouse protein phosphorylation and expression.</title>
        <authorList>
            <person name="Huttlin E.L."/>
            <person name="Jedrychowski M.P."/>
            <person name="Elias J.E."/>
            <person name="Goswami T."/>
            <person name="Rad R."/>
            <person name="Beausoleil S.A."/>
            <person name="Villen J."/>
            <person name="Haas W."/>
            <person name="Sowa M.E."/>
            <person name="Gygi S.P."/>
        </authorList>
    </citation>
    <scope>PHOSPHORYLATION [LARGE SCALE ANALYSIS] AT SER-241 AND SER-245</scope>
    <scope>PHOSPHORYLATION [LARGE SCALE ANALYSIS] AT SER-18 (ISOFORM 3)</scope>
    <scope>IDENTIFICATION BY MASS SPECTROMETRY [LARGE SCALE ANALYSIS]</scope>
    <source>
        <tissue>Brain</tissue>
        <tissue>Kidney</tissue>
        <tissue>Lung</tissue>
        <tissue>Spleen</tissue>
        <tissue>Testis</tissue>
    </source>
</reference>
<reference key="6">
    <citation type="journal article" date="2013" name="Oncogene">
        <title>The serologically defined colon cancer antigen-3 interacts with the protein tyrosine phosphatase PTPN13 and is involved in the regulation of cytokinesis.</title>
        <authorList>
            <person name="Hagemann N."/>
            <person name="Ackermann N."/>
            <person name="Christmann J."/>
            <person name="Brier S."/>
            <person name="Yu F."/>
            <person name="Erdmann K.S."/>
        </authorList>
    </citation>
    <scope>INTERACTION WITH GIT1</scope>
</reference>
<keyword id="KW-0025">Alternative splicing</keyword>
<keyword id="KW-0131">Cell cycle</keyword>
<keyword id="KW-0132">Cell division</keyword>
<keyword id="KW-0966">Cell projection</keyword>
<keyword id="KW-0970">Cilium biogenesis/degradation</keyword>
<keyword id="KW-0175">Coiled coil</keyword>
<keyword id="KW-0963">Cytoplasm</keyword>
<keyword id="KW-0206">Cytoskeleton</keyword>
<keyword id="KW-0967">Endosome</keyword>
<keyword id="KW-0597">Phosphoprotein</keyword>
<keyword id="KW-0653">Protein transport</keyword>
<keyword id="KW-1185">Reference proteome</keyword>
<keyword id="KW-0813">Transport</keyword>
<name>ENTR1_MOUSE</name>
<protein>
    <recommendedName>
        <fullName evidence="9">Endosome-associated-trafficking regulator 1</fullName>
    </recommendedName>
    <alternativeName>
        <fullName evidence="8">Serologically defined colon cancer antigen 3</fullName>
    </alternativeName>
</protein>
<feature type="chain" id="PRO_0000324286" description="Endosome-associated-trafficking regulator 1">
    <location>
        <begin position="1"/>
        <end position="432"/>
    </location>
</feature>
<feature type="region of interest" description="Disordered" evidence="3">
    <location>
        <begin position="126"/>
        <end position="145"/>
    </location>
</feature>
<feature type="region of interest" description="Required for interaction with PTPN13" evidence="1">
    <location>
        <begin position="174"/>
        <end position="196"/>
    </location>
</feature>
<feature type="region of interest" description="Disordered" evidence="3">
    <location>
        <begin position="226"/>
        <end position="250"/>
    </location>
</feature>
<feature type="coiled-coil region" evidence="2">
    <location>
        <begin position="262"/>
        <end position="289"/>
    </location>
</feature>
<feature type="coiled-coil region" evidence="2">
    <location>
        <begin position="315"/>
        <end position="370"/>
    </location>
</feature>
<feature type="compositionally biased region" description="Basic and acidic residues" evidence="3">
    <location>
        <begin position="126"/>
        <end position="143"/>
    </location>
</feature>
<feature type="modified residue" description="Phosphoserine" evidence="1">
    <location>
        <position position="18"/>
    </location>
</feature>
<feature type="modified residue" description="Phosphoserine" evidence="1">
    <location>
        <position position="148"/>
    </location>
</feature>
<feature type="modified residue" description="Phosphoserine" evidence="10">
    <location>
        <position position="241"/>
    </location>
</feature>
<feature type="modified residue" description="Phosphoserine" evidence="10">
    <location>
        <position position="245"/>
    </location>
</feature>
<feature type="splice variant" id="VSP_032178" description="In isoform 4." evidence="7">
    <location>
        <begin position="1"/>
        <end position="58"/>
    </location>
</feature>
<feature type="splice variant" id="VSP_032179" description="In isoform 3." evidence="6 7">
    <location>
        <begin position="24"/>
        <end position="96"/>
    </location>
</feature>
<feature type="splice variant" id="VSP_032180" description="In isoform 2 and isoform 6." evidence="6 7">
    <location>
        <begin position="24"/>
        <end position="73"/>
    </location>
</feature>
<feature type="splice variant" id="VSP_032181" description="In isoform 6." evidence="6">
    <original>EASRHPLG</original>
    <variation>VHLGSCQW</variation>
    <location>
        <begin position="136"/>
        <end position="143"/>
    </location>
</feature>
<feature type="splice variant" id="VSP_032182" description="In isoform 6." evidence="6">
    <location>
        <begin position="144"/>
        <end position="432"/>
    </location>
</feature>
<feature type="splice variant" id="VSP_032183" description="In isoform 5." evidence="7">
    <original>LKDENSKLRRKLNEVQSFSETQTEMVRTLERKLEAKMIKEESDFHDLESVVQQVEQNLELMTKRAVKAENHVLKLKQEINLLQAQLSNLRRENEALRSGQGASLSVVKQNTDVALQNLHLVMNSAHASIKQLVSGADTLNLVAEILKSIDRISEVKDEVDS</original>
    <variation>VSEGSVAPNTAELCCGEELQSSTSWVAWAQCHGQGS</variation>
    <location>
        <begin position="272"/>
        <end position="432"/>
    </location>
</feature>
<feature type="sequence conflict" description="In Ref. 1; BAE37459." evidence="9" ref="1">
    <original>N</original>
    <variation>D</variation>
    <location>
        <position position="173"/>
    </location>
</feature>
<feature type="sequence conflict" description="In Ref. 1; BAB29602." evidence="9" ref="1">
    <original>N</original>
    <variation>Y</variation>
    <location>
        <position position="183"/>
    </location>
</feature>
<feature type="sequence conflict" description="In Ref. 1; BAB32357." evidence="9" ref="1">
    <original>T</original>
    <variation>P</variation>
    <location>
        <position position="233"/>
    </location>
</feature>
<feature type="sequence conflict" description="In Ref. 1; BAB30158." evidence="9" ref="1">
    <original>L</original>
    <variation>V</variation>
    <location>
        <position position="375"/>
    </location>
</feature>
<feature type="modified residue" description="Phosphoserine" evidence="10">
    <location sequence="A2AIW0-3">
        <position position="18"/>
    </location>
</feature>